<feature type="chain" id="PRO_0000104068" description="Uncharacterized protein Mb2629">
    <location>
        <begin position="1"/>
        <end position="164"/>
    </location>
</feature>
<keyword id="KW-1185">Reference proteome</keyword>
<sequence length="164" mass="17616">MPLHQLAIAPVDVSGALLGLVLNAPAPRPLATHRLAHTDGSALQLGVLGASHVVTVEGRFCEEVSCVARSRGGDLPESTHAPGYHLQSHTETHDEAAFRRLARHLRERCTRATGWLGGVFPGDDAALTALAAEPDGTGWRWRTWHLYPSASGGTVVHTTSRWRP</sequence>
<gene>
    <name type="ordered locus">BQ2027_MB2629</name>
</gene>
<organism>
    <name type="scientific">Mycobacterium bovis (strain ATCC BAA-935 / AF2122/97)</name>
    <dbReference type="NCBI Taxonomy" id="233413"/>
    <lineage>
        <taxon>Bacteria</taxon>
        <taxon>Bacillati</taxon>
        <taxon>Actinomycetota</taxon>
        <taxon>Actinomycetes</taxon>
        <taxon>Mycobacteriales</taxon>
        <taxon>Mycobacteriaceae</taxon>
        <taxon>Mycobacterium</taxon>
        <taxon>Mycobacterium tuberculosis complex</taxon>
    </lineage>
</organism>
<dbReference type="EMBL" id="LT708304">
    <property type="protein sequence ID" value="SIU01247.1"/>
    <property type="molecule type" value="Genomic_DNA"/>
</dbReference>
<dbReference type="RefSeq" id="NP_856275.1">
    <property type="nucleotide sequence ID" value="NC_002945.3"/>
</dbReference>
<dbReference type="RefSeq" id="WP_003413444.1">
    <property type="nucleotide sequence ID" value="NC_002945.4"/>
</dbReference>
<dbReference type="KEGG" id="mbo:BQ2027_MB2629"/>
<dbReference type="PATRIC" id="fig|233413.5.peg.2890"/>
<dbReference type="Proteomes" id="UP000001419">
    <property type="component" value="Chromosome"/>
</dbReference>
<dbReference type="InterPro" id="IPR024486">
    <property type="entry name" value="DUF2617"/>
</dbReference>
<dbReference type="Pfam" id="PF10936">
    <property type="entry name" value="DUF2617"/>
    <property type="match status" value="1"/>
</dbReference>
<accession>P65032</accession>
<accession>A0A1R3Y1W9</accession>
<accession>Q50623</accession>
<accession>X2BLD8</accession>
<reference key="1">
    <citation type="journal article" date="2003" name="Proc. Natl. Acad. Sci. U.S.A.">
        <title>The complete genome sequence of Mycobacterium bovis.</title>
        <authorList>
            <person name="Garnier T."/>
            <person name="Eiglmeier K."/>
            <person name="Camus J.-C."/>
            <person name="Medina N."/>
            <person name="Mansoor H."/>
            <person name="Pryor M."/>
            <person name="Duthoy S."/>
            <person name="Grondin S."/>
            <person name="Lacroix C."/>
            <person name="Monsempe C."/>
            <person name="Simon S."/>
            <person name="Harris B."/>
            <person name="Atkin R."/>
            <person name="Doggett J."/>
            <person name="Mayes R."/>
            <person name="Keating L."/>
            <person name="Wheeler P.R."/>
            <person name="Parkhill J."/>
            <person name="Barrell B.G."/>
            <person name="Cole S.T."/>
            <person name="Gordon S.V."/>
            <person name="Hewinson R.G."/>
        </authorList>
    </citation>
    <scope>NUCLEOTIDE SEQUENCE [LARGE SCALE GENOMIC DNA]</scope>
    <source>
        <strain>ATCC BAA-935 / AF2122/97</strain>
    </source>
</reference>
<reference key="2">
    <citation type="journal article" date="2017" name="Genome Announc.">
        <title>Updated reference genome sequence and annotation of Mycobacterium bovis AF2122/97.</title>
        <authorList>
            <person name="Malone K.M."/>
            <person name="Farrell D."/>
            <person name="Stuber T.P."/>
            <person name="Schubert O.T."/>
            <person name="Aebersold R."/>
            <person name="Robbe-Austerman S."/>
            <person name="Gordon S.V."/>
        </authorList>
    </citation>
    <scope>NUCLEOTIDE SEQUENCE [LARGE SCALE GENOMIC DNA]</scope>
    <scope>GENOME REANNOTATION</scope>
    <source>
        <strain>ATCC BAA-935 / AF2122/97</strain>
    </source>
</reference>
<name>Y2629_MYCBO</name>
<protein>
    <recommendedName>
        <fullName>Uncharacterized protein Mb2629</fullName>
    </recommendedName>
</protein>
<proteinExistence type="predicted"/>